<comment type="function">
    <text evidence="1">Converts heme B (protoheme IX) to heme O by substitution of the vinyl group on carbon 2 of heme B porphyrin ring with a hydroxyethyl farnesyl side group.</text>
</comment>
<comment type="catalytic activity">
    <reaction evidence="1">
        <text>heme b + (2E,6E)-farnesyl diphosphate + H2O = Fe(II)-heme o + diphosphate</text>
        <dbReference type="Rhea" id="RHEA:28070"/>
        <dbReference type="ChEBI" id="CHEBI:15377"/>
        <dbReference type="ChEBI" id="CHEBI:33019"/>
        <dbReference type="ChEBI" id="CHEBI:60344"/>
        <dbReference type="ChEBI" id="CHEBI:60530"/>
        <dbReference type="ChEBI" id="CHEBI:175763"/>
        <dbReference type="EC" id="2.5.1.141"/>
    </reaction>
</comment>
<comment type="pathway">
    <text evidence="1">Porphyrin-containing compound metabolism; heme O biosynthesis; heme O from protoheme: step 1/1.</text>
</comment>
<comment type="subcellular location">
    <subcellularLocation>
        <location evidence="1">Cell inner membrane</location>
        <topology evidence="1">Multi-pass membrane protein</topology>
    </subcellularLocation>
</comment>
<comment type="miscellaneous">
    <text evidence="1">Carbon 2 of the heme B porphyrin ring is defined according to the Fischer nomenclature.</text>
</comment>
<comment type="similarity">
    <text evidence="1">Belongs to the UbiA prenyltransferase family. Protoheme IX farnesyltransferase subfamily.</text>
</comment>
<gene>
    <name evidence="1" type="primary">ctaB</name>
    <name type="ordered locus">Rfer_1689</name>
</gene>
<organism>
    <name type="scientific">Albidiferax ferrireducens (strain ATCC BAA-621 / DSM 15236 / T118)</name>
    <name type="common">Rhodoferax ferrireducens</name>
    <dbReference type="NCBI Taxonomy" id="338969"/>
    <lineage>
        <taxon>Bacteria</taxon>
        <taxon>Pseudomonadati</taxon>
        <taxon>Pseudomonadota</taxon>
        <taxon>Betaproteobacteria</taxon>
        <taxon>Burkholderiales</taxon>
        <taxon>Comamonadaceae</taxon>
        <taxon>Rhodoferax</taxon>
    </lineage>
</organism>
<protein>
    <recommendedName>
        <fullName evidence="1">Protoheme IX farnesyltransferase</fullName>
        <ecNumber evidence="1">2.5.1.141</ecNumber>
    </recommendedName>
    <alternativeName>
        <fullName evidence="1">Heme B farnesyltransferase</fullName>
    </alternativeName>
    <alternativeName>
        <fullName evidence="1">Heme O synthase</fullName>
    </alternativeName>
</protein>
<dbReference type="EC" id="2.5.1.141" evidence="1"/>
<dbReference type="EMBL" id="CP000267">
    <property type="protein sequence ID" value="ABD69419.1"/>
    <property type="molecule type" value="Genomic_DNA"/>
</dbReference>
<dbReference type="RefSeq" id="WP_011463987.1">
    <property type="nucleotide sequence ID" value="NC_007908.1"/>
</dbReference>
<dbReference type="SMR" id="Q21XT4"/>
<dbReference type="STRING" id="338969.Rfer_1689"/>
<dbReference type="KEGG" id="rfr:Rfer_1689"/>
<dbReference type="eggNOG" id="COG0109">
    <property type="taxonomic scope" value="Bacteria"/>
</dbReference>
<dbReference type="HOGENOM" id="CLU_029631_0_2_4"/>
<dbReference type="OrthoDB" id="9814417at2"/>
<dbReference type="UniPathway" id="UPA00834">
    <property type="reaction ID" value="UER00712"/>
</dbReference>
<dbReference type="Proteomes" id="UP000008332">
    <property type="component" value="Chromosome"/>
</dbReference>
<dbReference type="GO" id="GO:0005886">
    <property type="term" value="C:plasma membrane"/>
    <property type="evidence" value="ECO:0007669"/>
    <property type="project" value="UniProtKB-SubCell"/>
</dbReference>
<dbReference type="GO" id="GO:0008495">
    <property type="term" value="F:protoheme IX farnesyltransferase activity"/>
    <property type="evidence" value="ECO:0007669"/>
    <property type="project" value="UniProtKB-UniRule"/>
</dbReference>
<dbReference type="GO" id="GO:0048034">
    <property type="term" value="P:heme O biosynthetic process"/>
    <property type="evidence" value="ECO:0007669"/>
    <property type="project" value="UniProtKB-UniRule"/>
</dbReference>
<dbReference type="CDD" id="cd13957">
    <property type="entry name" value="PT_UbiA_Cox10"/>
    <property type="match status" value="1"/>
</dbReference>
<dbReference type="Gene3D" id="1.10.357.140">
    <property type="entry name" value="UbiA prenyltransferase"/>
    <property type="match status" value="1"/>
</dbReference>
<dbReference type="HAMAP" id="MF_00154">
    <property type="entry name" value="CyoE_CtaB"/>
    <property type="match status" value="1"/>
</dbReference>
<dbReference type="InterPro" id="IPR006369">
    <property type="entry name" value="Protohaem_IX_farnesylTrfase"/>
</dbReference>
<dbReference type="InterPro" id="IPR000537">
    <property type="entry name" value="UbiA_prenyltransferase"/>
</dbReference>
<dbReference type="InterPro" id="IPR030470">
    <property type="entry name" value="UbiA_prenylTrfase_CS"/>
</dbReference>
<dbReference type="InterPro" id="IPR044878">
    <property type="entry name" value="UbiA_sf"/>
</dbReference>
<dbReference type="NCBIfam" id="TIGR01473">
    <property type="entry name" value="cyoE_ctaB"/>
    <property type="match status" value="1"/>
</dbReference>
<dbReference type="NCBIfam" id="NF003349">
    <property type="entry name" value="PRK04375.1-2"/>
    <property type="match status" value="1"/>
</dbReference>
<dbReference type="PANTHER" id="PTHR43448:SF7">
    <property type="entry name" value="4-HYDROXYBENZOATE SOLANESYLTRANSFERASE"/>
    <property type="match status" value="1"/>
</dbReference>
<dbReference type="PANTHER" id="PTHR43448">
    <property type="entry name" value="PROTOHEME IX FARNESYLTRANSFERASE, MITOCHONDRIAL"/>
    <property type="match status" value="1"/>
</dbReference>
<dbReference type="Pfam" id="PF01040">
    <property type="entry name" value="UbiA"/>
    <property type="match status" value="1"/>
</dbReference>
<dbReference type="PROSITE" id="PS00943">
    <property type="entry name" value="UBIA"/>
    <property type="match status" value="1"/>
</dbReference>
<reference key="1">
    <citation type="submission" date="2006-02" db="EMBL/GenBank/DDBJ databases">
        <title>Complete sequence of chromosome of Rhodoferax ferrireducens DSM 15236.</title>
        <authorList>
            <person name="Copeland A."/>
            <person name="Lucas S."/>
            <person name="Lapidus A."/>
            <person name="Barry K."/>
            <person name="Detter J.C."/>
            <person name="Glavina del Rio T."/>
            <person name="Hammon N."/>
            <person name="Israni S."/>
            <person name="Pitluck S."/>
            <person name="Brettin T."/>
            <person name="Bruce D."/>
            <person name="Han C."/>
            <person name="Tapia R."/>
            <person name="Gilna P."/>
            <person name="Kiss H."/>
            <person name="Schmutz J."/>
            <person name="Larimer F."/>
            <person name="Land M."/>
            <person name="Kyrpides N."/>
            <person name="Ivanova N."/>
            <person name="Richardson P."/>
        </authorList>
    </citation>
    <scope>NUCLEOTIDE SEQUENCE [LARGE SCALE GENOMIC DNA]</scope>
    <source>
        <strain>ATCC BAA-621 / DSM 15236 / T118</strain>
    </source>
</reference>
<accession>Q21XT4</accession>
<keyword id="KW-0997">Cell inner membrane</keyword>
<keyword id="KW-1003">Cell membrane</keyword>
<keyword id="KW-0350">Heme biosynthesis</keyword>
<keyword id="KW-0472">Membrane</keyword>
<keyword id="KW-1185">Reference proteome</keyword>
<keyword id="KW-0808">Transferase</keyword>
<keyword id="KW-0812">Transmembrane</keyword>
<keyword id="KW-1133">Transmembrane helix</keyword>
<feature type="chain" id="PRO_0000327138" description="Protoheme IX farnesyltransferase">
    <location>
        <begin position="1"/>
        <end position="298"/>
    </location>
</feature>
<feature type="transmembrane region" description="Helical" evidence="1">
    <location>
        <begin position="24"/>
        <end position="44"/>
    </location>
</feature>
<feature type="transmembrane region" description="Helical" evidence="1">
    <location>
        <begin position="49"/>
        <end position="69"/>
    </location>
</feature>
<feature type="transmembrane region" description="Helical" evidence="1">
    <location>
        <begin position="100"/>
        <end position="120"/>
    </location>
</feature>
<feature type="transmembrane region" description="Helical" evidence="1">
    <location>
        <begin position="121"/>
        <end position="141"/>
    </location>
</feature>
<feature type="transmembrane region" description="Helical" evidence="1">
    <location>
        <begin position="149"/>
        <end position="169"/>
    </location>
</feature>
<feature type="transmembrane region" description="Helical" evidence="1">
    <location>
        <begin position="175"/>
        <end position="195"/>
    </location>
</feature>
<feature type="transmembrane region" description="Helical" evidence="1">
    <location>
        <begin position="220"/>
        <end position="240"/>
    </location>
</feature>
<feature type="transmembrane region" description="Helical" evidence="1">
    <location>
        <begin position="244"/>
        <end position="264"/>
    </location>
</feature>
<feature type="transmembrane region" description="Helical" evidence="1">
    <location>
        <begin position="277"/>
        <end position="297"/>
    </location>
</feature>
<sequence length="298" mass="33257">MSVHVLSVEVSVIKQFYALTKPRVIQLIVFCALIGMVLAVPGLPTWAELQLALLACLGIWLVAGAAAAFNCVVEKSIDAKMKRTAWRPTARGELADWQTLLFSAVLCAAGSILLYFWVNPLTMWLTFATFIGYAVVYTVILKPLTPQNIVIGGASGAMPPVLGWAAMAGDVGPEALILFLIIFLWTPPHFWALALYRVEDYRKSGLPMLPVTHGNEFTRLMVLLYTFILFAACLMPYVYGMSSWLYLIAAVVLNLGFCLYAFYLWRDYSDLLARKTFRFSLIHLSLLFAALLLDHYLL</sequence>
<evidence type="ECO:0000255" key="1">
    <source>
        <dbReference type="HAMAP-Rule" id="MF_00154"/>
    </source>
</evidence>
<name>COXX_ALBFT</name>
<proteinExistence type="inferred from homology"/>